<gene>
    <name evidence="1" type="primary">rpsR</name>
    <name type="ordered locus">FTN_0950</name>
</gene>
<evidence type="ECO:0000255" key="1">
    <source>
        <dbReference type="HAMAP-Rule" id="MF_00270"/>
    </source>
</evidence>
<evidence type="ECO:0000305" key="2"/>
<comment type="function">
    <text evidence="1">Binds as a heterodimer with protein bS6 to the central domain of the 16S rRNA, where it helps stabilize the platform of the 30S subunit.</text>
</comment>
<comment type="subunit">
    <text evidence="1">Part of the 30S ribosomal subunit. Forms a tight heterodimer with protein bS6.</text>
</comment>
<comment type="similarity">
    <text evidence="1">Belongs to the bacterial ribosomal protein bS18 family.</text>
</comment>
<organism>
    <name type="scientific">Francisella tularensis subsp. novicida (strain U112)</name>
    <dbReference type="NCBI Taxonomy" id="401614"/>
    <lineage>
        <taxon>Bacteria</taxon>
        <taxon>Pseudomonadati</taxon>
        <taxon>Pseudomonadota</taxon>
        <taxon>Gammaproteobacteria</taxon>
        <taxon>Thiotrichales</taxon>
        <taxon>Francisellaceae</taxon>
        <taxon>Francisella</taxon>
    </lineage>
</organism>
<dbReference type="EMBL" id="CP000439">
    <property type="protein sequence ID" value="ABK89838.1"/>
    <property type="molecule type" value="Genomic_DNA"/>
</dbReference>
<dbReference type="RefSeq" id="WP_003021184.1">
    <property type="nucleotide sequence ID" value="NZ_CP009633.1"/>
</dbReference>
<dbReference type="SMR" id="A0Q6H3"/>
<dbReference type="GeneID" id="75265314"/>
<dbReference type="KEGG" id="ftn:FTN_0950"/>
<dbReference type="KEGG" id="ftx:AW25_1062"/>
<dbReference type="BioCyc" id="FTUL401614:G1G75-990-MONOMER"/>
<dbReference type="Proteomes" id="UP000000762">
    <property type="component" value="Chromosome"/>
</dbReference>
<dbReference type="GO" id="GO:0022627">
    <property type="term" value="C:cytosolic small ribosomal subunit"/>
    <property type="evidence" value="ECO:0007669"/>
    <property type="project" value="TreeGrafter"/>
</dbReference>
<dbReference type="GO" id="GO:0070181">
    <property type="term" value="F:small ribosomal subunit rRNA binding"/>
    <property type="evidence" value="ECO:0007669"/>
    <property type="project" value="TreeGrafter"/>
</dbReference>
<dbReference type="GO" id="GO:0003735">
    <property type="term" value="F:structural constituent of ribosome"/>
    <property type="evidence" value="ECO:0007669"/>
    <property type="project" value="InterPro"/>
</dbReference>
<dbReference type="GO" id="GO:0006412">
    <property type="term" value="P:translation"/>
    <property type="evidence" value="ECO:0007669"/>
    <property type="project" value="UniProtKB-UniRule"/>
</dbReference>
<dbReference type="Gene3D" id="4.10.640.10">
    <property type="entry name" value="Ribosomal protein S18"/>
    <property type="match status" value="1"/>
</dbReference>
<dbReference type="HAMAP" id="MF_00270">
    <property type="entry name" value="Ribosomal_bS18"/>
    <property type="match status" value="1"/>
</dbReference>
<dbReference type="InterPro" id="IPR001648">
    <property type="entry name" value="Ribosomal_bS18"/>
</dbReference>
<dbReference type="InterPro" id="IPR018275">
    <property type="entry name" value="Ribosomal_bS18_CS"/>
</dbReference>
<dbReference type="InterPro" id="IPR036870">
    <property type="entry name" value="Ribosomal_bS18_sf"/>
</dbReference>
<dbReference type="NCBIfam" id="TIGR00165">
    <property type="entry name" value="S18"/>
    <property type="match status" value="1"/>
</dbReference>
<dbReference type="PANTHER" id="PTHR13479">
    <property type="entry name" value="30S RIBOSOMAL PROTEIN S18"/>
    <property type="match status" value="1"/>
</dbReference>
<dbReference type="PANTHER" id="PTHR13479:SF40">
    <property type="entry name" value="SMALL RIBOSOMAL SUBUNIT PROTEIN BS18M"/>
    <property type="match status" value="1"/>
</dbReference>
<dbReference type="Pfam" id="PF01084">
    <property type="entry name" value="Ribosomal_S18"/>
    <property type="match status" value="1"/>
</dbReference>
<dbReference type="PRINTS" id="PR00974">
    <property type="entry name" value="RIBOSOMALS18"/>
</dbReference>
<dbReference type="SUPFAM" id="SSF46911">
    <property type="entry name" value="Ribosomal protein S18"/>
    <property type="match status" value="1"/>
</dbReference>
<dbReference type="PROSITE" id="PS00057">
    <property type="entry name" value="RIBOSOMAL_S18"/>
    <property type="match status" value="1"/>
</dbReference>
<name>RS18_FRATN</name>
<sequence length="72" mass="8352">MSRRKVCRFTVEGVKEIDYKDVNKLKAYITETGKIVPSRVTGTSAKYQRQLATAIKRARFLALLPYCDRHFN</sequence>
<feature type="chain" id="PRO_0000345473" description="Small ribosomal subunit protein bS18">
    <location>
        <begin position="1"/>
        <end position="72"/>
    </location>
</feature>
<reference key="1">
    <citation type="journal article" date="2007" name="Genome Biol.">
        <title>Comparison of Francisella tularensis genomes reveals evolutionary events associated with the emergence of human pathogenic strains.</title>
        <authorList>
            <person name="Rohmer L."/>
            <person name="Fong C."/>
            <person name="Abmayr S."/>
            <person name="Wasnick M."/>
            <person name="Larson Freeman T.J."/>
            <person name="Radey M."/>
            <person name="Guina T."/>
            <person name="Svensson K."/>
            <person name="Hayden H.S."/>
            <person name="Jacobs M."/>
            <person name="Gallagher L.A."/>
            <person name="Manoil C."/>
            <person name="Ernst R.K."/>
            <person name="Drees B."/>
            <person name="Buckley D."/>
            <person name="Haugen E."/>
            <person name="Bovee D."/>
            <person name="Zhou Y."/>
            <person name="Chang J."/>
            <person name="Levy R."/>
            <person name="Lim R."/>
            <person name="Gillett W."/>
            <person name="Guenthener D."/>
            <person name="Kang A."/>
            <person name="Shaffer S.A."/>
            <person name="Taylor G."/>
            <person name="Chen J."/>
            <person name="Gallis B."/>
            <person name="D'Argenio D.A."/>
            <person name="Forsman M."/>
            <person name="Olson M.V."/>
            <person name="Goodlett D.R."/>
            <person name="Kaul R."/>
            <person name="Miller S.I."/>
            <person name="Brittnacher M.J."/>
        </authorList>
    </citation>
    <scope>NUCLEOTIDE SEQUENCE [LARGE SCALE GENOMIC DNA]</scope>
    <source>
        <strain>U112</strain>
    </source>
</reference>
<proteinExistence type="inferred from homology"/>
<keyword id="KW-0687">Ribonucleoprotein</keyword>
<keyword id="KW-0689">Ribosomal protein</keyword>
<keyword id="KW-0694">RNA-binding</keyword>
<keyword id="KW-0699">rRNA-binding</keyword>
<accession>A0Q6H3</accession>
<protein>
    <recommendedName>
        <fullName evidence="1">Small ribosomal subunit protein bS18</fullName>
    </recommendedName>
    <alternativeName>
        <fullName evidence="2">30S ribosomal protein S18</fullName>
    </alternativeName>
</protein>